<sequence>MSMVYANIFLAFIMSLMGLLMYRSHLMSSLLCLEGMMLSLFVMMTVTILNNHFTLASMAPIILLVFAACEAALGLSLLVMVSNTYGTDYVQNLNLLQC</sequence>
<organism>
    <name type="scientific">Halichoerus grypus</name>
    <name type="common">Gray seal</name>
    <name type="synonym">Phoca grypus</name>
    <dbReference type="NCBI Taxonomy" id="9711"/>
    <lineage>
        <taxon>Eukaryota</taxon>
        <taxon>Metazoa</taxon>
        <taxon>Chordata</taxon>
        <taxon>Craniata</taxon>
        <taxon>Vertebrata</taxon>
        <taxon>Euteleostomi</taxon>
        <taxon>Mammalia</taxon>
        <taxon>Eutheria</taxon>
        <taxon>Laurasiatheria</taxon>
        <taxon>Carnivora</taxon>
        <taxon>Caniformia</taxon>
        <taxon>Pinnipedia</taxon>
        <taxon>Phocidae</taxon>
        <taxon>Phocinae</taxon>
        <taxon>Halichoerus</taxon>
    </lineage>
</organism>
<name>NU4LM_HALGR</name>
<geneLocation type="mitochondrion"/>
<feature type="chain" id="PRO_0000118426" description="NADH-ubiquinone oxidoreductase chain 4L">
    <location>
        <begin position="1"/>
        <end position="98"/>
    </location>
</feature>
<feature type="transmembrane region" description="Helical" evidence="3">
    <location>
        <begin position="1"/>
        <end position="21"/>
    </location>
</feature>
<feature type="transmembrane region" description="Helical" evidence="3">
    <location>
        <begin position="29"/>
        <end position="49"/>
    </location>
</feature>
<feature type="transmembrane region" description="Helical" evidence="3">
    <location>
        <begin position="61"/>
        <end position="81"/>
    </location>
</feature>
<accession>P68309</accession>
<accession>Q00544</accession>
<evidence type="ECO:0000250" key="1">
    <source>
        <dbReference type="UniProtKB" id="P03901"/>
    </source>
</evidence>
<evidence type="ECO:0000250" key="2">
    <source>
        <dbReference type="UniProtKB" id="P03902"/>
    </source>
</evidence>
<evidence type="ECO:0000255" key="3"/>
<evidence type="ECO:0000305" key="4"/>
<keyword id="KW-0249">Electron transport</keyword>
<keyword id="KW-0472">Membrane</keyword>
<keyword id="KW-0496">Mitochondrion</keyword>
<keyword id="KW-0999">Mitochondrion inner membrane</keyword>
<keyword id="KW-0520">NAD</keyword>
<keyword id="KW-0679">Respiratory chain</keyword>
<keyword id="KW-1278">Translocase</keyword>
<keyword id="KW-0812">Transmembrane</keyword>
<keyword id="KW-1133">Transmembrane helix</keyword>
<keyword id="KW-0813">Transport</keyword>
<keyword id="KW-0830">Ubiquinone</keyword>
<proteinExistence type="inferred from homology"/>
<gene>
    <name type="primary">MT-ND4L</name>
    <name type="synonym">MTND4L</name>
    <name type="synonym">NADH4L</name>
    <name type="synonym">ND4L</name>
</gene>
<dbReference type="EC" id="7.1.1.2"/>
<dbReference type="EMBL" id="X72004">
    <property type="protein sequence ID" value="CAA50885.1"/>
    <property type="molecule type" value="Genomic_DNA"/>
</dbReference>
<dbReference type="PIR" id="S41843">
    <property type="entry name" value="S41843"/>
</dbReference>
<dbReference type="RefSeq" id="NP_007077.1">
    <property type="nucleotide sequence ID" value="NC_001602.1"/>
</dbReference>
<dbReference type="SMR" id="P68309"/>
<dbReference type="GeneID" id="807748"/>
<dbReference type="CTD" id="4539"/>
<dbReference type="GO" id="GO:0005743">
    <property type="term" value="C:mitochondrial inner membrane"/>
    <property type="evidence" value="ECO:0000250"/>
    <property type="project" value="UniProtKB"/>
</dbReference>
<dbReference type="GO" id="GO:0045271">
    <property type="term" value="C:respiratory chain complex I"/>
    <property type="evidence" value="ECO:0000250"/>
    <property type="project" value="UniProtKB"/>
</dbReference>
<dbReference type="GO" id="GO:0008137">
    <property type="term" value="F:NADH dehydrogenase (ubiquinone) activity"/>
    <property type="evidence" value="ECO:0000250"/>
    <property type="project" value="UniProtKB"/>
</dbReference>
<dbReference type="GO" id="GO:0042773">
    <property type="term" value="P:ATP synthesis coupled electron transport"/>
    <property type="evidence" value="ECO:0007669"/>
    <property type="project" value="InterPro"/>
</dbReference>
<dbReference type="FunFam" id="1.10.287.3510:FF:000002">
    <property type="entry name" value="NADH-ubiquinone oxidoreductase chain 4L"/>
    <property type="match status" value="1"/>
</dbReference>
<dbReference type="Gene3D" id="1.10.287.3510">
    <property type="match status" value="1"/>
</dbReference>
<dbReference type="InterPro" id="IPR001133">
    <property type="entry name" value="NADH_UbQ_OxRdtase_chain4L/K"/>
</dbReference>
<dbReference type="InterPro" id="IPR039428">
    <property type="entry name" value="NUOK/Mnh_C1-like"/>
</dbReference>
<dbReference type="PANTHER" id="PTHR11434:SF0">
    <property type="entry name" value="NADH-UBIQUINONE OXIDOREDUCTASE CHAIN 4L"/>
    <property type="match status" value="1"/>
</dbReference>
<dbReference type="PANTHER" id="PTHR11434">
    <property type="entry name" value="NADH-UBIQUINONE OXIDOREDUCTASE SUBUNIT ND4L"/>
    <property type="match status" value="1"/>
</dbReference>
<dbReference type="Pfam" id="PF00420">
    <property type="entry name" value="Oxidored_q2"/>
    <property type="match status" value="1"/>
</dbReference>
<reference key="1">
    <citation type="journal article" date="1993" name="J. Mol. Evol.">
        <title>The nucleotide sequence of the mitochondrial DNA molecule of the grey seal, Halichoerus grypus, and a comparison with mitochondrial sequences of other true seals.</title>
        <authorList>
            <person name="Arnason U."/>
            <person name="Gullberg A."/>
            <person name="Johnsson E."/>
            <person name="Ledje C."/>
        </authorList>
    </citation>
    <scope>NUCLEOTIDE SEQUENCE [GENOMIC DNA]</scope>
</reference>
<comment type="function">
    <text evidence="1">Core subunit of the mitochondrial membrane respiratory chain NADH dehydrogenase (Complex I) which catalyzes electron transfer from NADH through the respiratory chain, using ubiquinone as an electron acceptor. Part of the enzyme membrane arm which is embedded in the lipid bilayer and involved in proton translocation.</text>
</comment>
<comment type="catalytic activity">
    <reaction evidence="1">
        <text>a ubiquinone + NADH + 5 H(+)(in) = a ubiquinol + NAD(+) + 4 H(+)(out)</text>
        <dbReference type="Rhea" id="RHEA:29091"/>
        <dbReference type="Rhea" id="RHEA-COMP:9565"/>
        <dbReference type="Rhea" id="RHEA-COMP:9566"/>
        <dbReference type="ChEBI" id="CHEBI:15378"/>
        <dbReference type="ChEBI" id="CHEBI:16389"/>
        <dbReference type="ChEBI" id="CHEBI:17976"/>
        <dbReference type="ChEBI" id="CHEBI:57540"/>
        <dbReference type="ChEBI" id="CHEBI:57945"/>
        <dbReference type="EC" id="7.1.1.2"/>
    </reaction>
    <physiologicalReaction direction="left-to-right" evidence="1">
        <dbReference type="Rhea" id="RHEA:29092"/>
    </physiologicalReaction>
</comment>
<comment type="subunit">
    <text evidence="2">Core subunit of respiratory chain NADH dehydrogenase (Complex I) which is composed of 45 different subunits.</text>
</comment>
<comment type="subcellular location">
    <subcellularLocation>
        <location evidence="2">Mitochondrion inner membrane</location>
        <topology evidence="3">Multi-pass membrane protein</topology>
    </subcellularLocation>
</comment>
<comment type="similarity">
    <text evidence="4">Belongs to the complex I subunit 4L family.</text>
</comment>
<protein>
    <recommendedName>
        <fullName>NADH-ubiquinone oxidoreductase chain 4L</fullName>
        <ecNumber>7.1.1.2</ecNumber>
    </recommendedName>
    <alternativeName>
        <fullName>NADH dehydrogenase subunit 4L</fullName>
    </alternativeName>
</protein>